<dbReference type="EMBL" id="MN784118">
    <property type="protein sequence ID" value="QNO39342.1"/>
    <property type="molecule type" value="mRNA"/>
</dbReference>
<dbReference type="SMR" id="P0DQP4"/>
<dbReference type="GO" id="GO:0005576">
    <property type="term" value="C:extracellular region"/>
    <property type="evidence" value="ECO:0007669"/>
    <property type="project" value="UniProtKB-SubCell"/>
</dbReference>
<dbReference type="GO" id="GO:0017080">
    <property type="term" value="F:sodium channel regulator activity"/>
    <property type="evidence" value="ECO:0007669"/>
    <property type="project" value="UniProtKB-KW"/>
</dbReference>
<dbReference type="GO" id="GO:0090729">
    <property type="term" value="F:toxin activity"/>
    <property type="evidence" value="ECO:0007669"/>
    <property type="project" value="UniProtKB-KW"/>
</dbReference>
<dbReference type="GO" id="GO:0006952">
    <property type="term" value="P:defense response"/>
    <property type="evidence" value="ECO:0007669"/>
    <property type="project" value="UniProtKB-KW"/>
</dbReference>
<organism>
    <name type="scientific">Dendrocnide moroides</name>
    <name type="common">Gympie stinging tree</name>
    <name type="synonym">Laportea moroides</name>
    <dbReference type="NCBI Taxonomy" id="1842752"/>
    <lineage>
        <taxon>Eukaryota</taxon>
        <taxon>Viridiplantae</taxon>
        <taxon>Streptophyta</taxon>
        <taxon>Embryophyta</taxon>
        <taxon>Tracheophyta</taxon>
        <taxon>Spermatophyta</taxon>
        <taxon>Magnoliopsida</taxon>
        <taxon>eudicotyledons</taxon>
        <taxon>Gunneridae</taxon>
        <taxon>Pentapetalae</taxon>
        <taxon>rosids</taxon>
        <taxon>fabids</taxon>
        <taxon>Rosales</taxon>
        <taxon>Urticaceae</taxon>
        <taxon>Dendrocnide</taxon>
    </lineage>
</organism>
<protein>
    <recommendedName>
        <fullName evidence="4">Moroidotoxin A</fullName>
        <shortName evidence="4">MoTxA</shortName>
    </recommendedName>
</protein>
<comment type="function">
    <text evidence="1 3">Neurotoxin certainly responsible for the defensive, persistent, and painful stings of the giant stinging tree (PubMed:32938666). Inhibits inactivation of Nav1.7/SCN9A sodium channel in sensory neurons by directly interacting with TMEM233, a newly described Nav-interacting protein (By similarity) (PubMed:32938666). Has virtually no effect on Nav1.7/SCN9A function in heterologous expression systems and in neurons that do not express TMEM233 (By similarity). Also weakly but significantly affects Nav1.8/SCN10A (By similarity). Coexpression of TMEM233 with Nav also confers ExTxA sensitivity to Nav1.1-Nav1.6 (By similarity). On the Nav1.7/SCN9A channel, causes a significant hyperpolarizing shift in the voltage dependence of activation (PubMed:32938666). Its effects on Nav currents are irreversible, with no apparent reduction in activity even after repeated wash steps over 30 minutes (By similarity). In vivo, induces nocifensive behavior in mice (licking or biting and shaking or lifting of the affected paw) lasting for approximately 1 hour (PubMed:32938666).</text>
</comment>
<comment type="subcellular location">
    <subcellularLocation>
        <location evidence="6">Secreted</location>
    </subcellularLocation>
</comment>
<comment type="tissue specificity">
    <text evidence="1">Expressed in trichomes, that are stiff epidermal hairs located on the surface of petioles and leaves. Not expressed in other aerial parts.</text>
</comment>
<comment type="domain">
    <text evidence="1">The presence of a 'disulfide through disulfide knot' structurally defines this protein as a knottin.</text>
</comment>
<comment type="miscellaneous">
    <text evidence="6">The name 'gympietide' is derived from the name in the Gubbi-Gubbi language for the stinging trees (gympie-gympie).</text>
</comment>
<comment type="similarity">
    <text evidence="5">Belongs to the gympietide family.</text>
</comment>
<accession>P0DQP4</accession>
<accession>A0A7G9XV75</accession>
<evidence type="ECO:0000250" key="1">
    <source>
        <dbReference type="UniProtKB" id="P0DQP3"/>
    </source>
</evidence>
<evidence type="ECO:0000255" key="2"/>
<evidence type="ECO:0000269" key="3">
    <source>
    </source>
</evidence>
<evidence type="ECO:0000303" key="4">
    <source>
    </source>
</evidence>
<evidence type="ECO:0000305" key="5"/>
<evidence type="ECO:0000305" key="6">
    <source>
    </source>
</evidence>
<sequence length="80" mass="8424">MAAVKKHLRFALVAAITIALLVAGSVADESSEDIDNIVIKTPLDIPRCDSPLCSLFRIGLCGDKCFCVPLPIVGICVPSV</sequence>
<name>NTXA_DENMD</name>
<feature type="signal peptide" evidence="2">
    <location>
        <begin position="1"/>
        <end position="27"/>
    </location>
</feature>
<feature type="propeptide" id="PRO_0000452287" evidence="6">
    <location>
        <begin position="28"/>
        <end position="44"/>
    </location>
</feature>
<feature type="chain" id="PRO_0000452288" description="Moroidotoxin A" evidence="6">
    <location>
        <begin position="45"/>
        <end position="80"/>
    </location>
</feature>
<feature type="disulfide bond" evidence="1">
    <location>
        <begin position="48"/>
        <end position="65"/>
    </location>
</feature>
<feature type="disulfide bond" evidence="1">
    <location>
        <begin position="53"/>
        <end position="67"/>
    </location>
</feature>
<feature type="disulfide bond" evidence="1">
    <location>
        <begin position="61"/>
        <end position="76"/>
    </location>
</feature>
<reference key="1">
    <citation type="journal article" date="2020" name="Sci. Adv.">
        <title>Neurotoxic peptides from the venom of the giant Australian stinging tree.</title>
        <authorList>
            <person name="Gilding E.K."/>
            <person name="Jami S."/>
            <person name="Deuis J.R."/>
            <person name="Israel M.R."/>
            <person name="Harvey P.J."/>
            <person name="Poth A.G."/>
            <person name="Rehm F.B.H."/>
            <person name="Stow J.L."/>
            <person name="Robinson S.D."/>
            <person name="Yap K."/>
            <person name="Brown D.L."/>
            <person name="Hamilton B.R."/>
            <person name="Andersson D."/>
            <person name="Craik D.J."/>
            <person name="Vetter I."/>
            <person name="Durek T."/>
        </authorList>
    </citation>
    <scope>NUCLEOTIDE SEQUENCE [MRNA]</scope>
    <scope>FUNCTION</scope>
    <scope>SYNTHESIS OF 45-80</scope>
    <scope>SUBCELLULAR LOCATION</scope>
</reference>
<keyword id="KW-1015">Disulfide bond</keyword>
<keyword id="KW-0872">Ion channel impairing toxin</keyword>
<keyword id="KW-0960">Knottin</keyword>
<keyword id="KW-0528">Neurotoxin</keyword>
<keyword id="KW-0611">Plant defense</keyword>
<keyword id="KW-0964">Secreted</keyword>
<keyword id="KW-0732">Signal</keyword>
<keyword id="KW-0800">Toxin</keyword>
<keyword id="KW-0738">Voltage-gated sodium channel impairing toxin</keyword>
<proteinExistence type="inferred from homology"/>